<feature type="chain" id="PRO_0000075854" description="Paxillin">
    <location>
        <begin position="1"/>
        <end position="591"/>
    </location>
</feature>
<feature type="domain" description="LIM zinc-binding 1" evidence="4">
    <location>
        <begin position="356"/>
        <end position="415"/>
    </location>
</feature>
<feature type="domain" description="LIM zinc-binding 2" evidence="4">
    <location>
        <begin position="416"/>
        <end position="473"/>
    </location>
</feature>
<feature type="domain" description="LIM zinc-binding 3" evidence="4">
    <location>
        <begin position="474"/>
        <end position="533"/>
    </location>
</feature>
<feature type="domain" description="LIM zinc-binding 4" evidence="4">
    <location>
        <begin position="534"/>
        <end position="591"/>
    </location>
</feature>
<feature type="region of interest" description="Disordered" evidence="5">
    <location>
        <begin position="17"/>
        <end position="139"/>
    </location>
</feature>
<feature type="region of interest" description="Disordered" evidence="5">
    <location>
        <begin position="156"/>
        <end position="261"/>
    </location>
</feature>
<feature type="region of interest" description="Required for binding to PARVA and ILK" evidence="2">
    <location>
        <begin position="262"/>
        <end position="315"/>
    </location>
</feature>
<feature type="region of interest" description="Disordered" evidence="5">
    <location>
        <begin position="289"/>
        <end position="338"/>
    </location>
</feature>
<feature type="short sequence motif" description="LD motif 1">
    <location>
        <begin position="3"/>
        <end position="15"/>
    </location>
</feature>
<feature type="short sequence motif" description="LD motif 2">
    <location>
        <begin position="144"/>
        <end position="156"/>
    </location>
</feature>
<feature type="short sequence motif" description="LD motif 3">
    <location>
        <begin position="216"/>
        <end position="228"/>
    </location>
</feature>
<feature type="short sequence motif" description="LD motif 4">
    <location>
        <begin position="265"/>
        <end position="276"/>
    </location>
</feature>
<feature type="short sequence motif" description="LD motif 5">
    <location>
        <begin position="333"/>
        <end position="345"/>
    </location>
</feature>
<feature type="compositionally biased region" description="Pro residues" evidence="5">
    <location>
        <begin position="45"/>
        <end position="54"/>
    </location>
</feature>
<feature type="compositionally biased region" description="Low complexity" evidence="5">
    <location>
        <begin position="89"/>
        <end position="99"/>
    </location>
</feature>
<feature type="compositionally biased region" description="Polar residues" evidence="5">
    <location>
        <begin position="121"/>
        <end position="137"/>
    </location>
</feature>
<feature type="compositionally biased region" description="Polar residues" evidence="5">
    <location>
        <begin position="236"/>
        <end position="261"/>
    </location>
</feature>
<feature type="compositionally biased region" description="Low complexity" evidence="5">
    <location>
        <begin position="315"/>
        <end position="334"/>
    </location>
</feature>
<feature type="modified residue" description="N-acetylmethionine" evidence="1">
    <location>
        <position position="1"/>
    </location>
</feature>
<feature type="modified residue" description="Phosphotyrosine; by PTK6" evidence="1">
    <location>
        <position position="31"/>
    </location>
</feature>
<feature type="modified residue" description="Phosphoserine" evidence="16 17">
    <location>
        <position position="83"/>
    </location>
</feature>
<feature type="modified residue" description="Phosphotyrosine" evidence="16">
    <location>
        <position position="88"/>
    </location>
</feature>
<feature type="modified residue" description="Phosphoserine" evidence="1">
    <location>
        <position position="106"/>
    </location>
</feature>
<feature type="modified residue" description="Phosphotyrosine; by PTK6" evidence="9 15 16 17">
    <location>
        <position position="118"/>
    </location>
</feature>
<feature type="modified residue" description="Phosphoserine" evidence="1">
    <location>
        <position position="119"/>
    </location>
</feature>
<feature type="modified residue" description="Phosphoserine" evidence="17">
    <location>
        <position position="126"/>
    </location>
</feature>
<feature type="modified residue" description="Phosphoserine" evidence="17">
    <location>
        <position position="130"/>
    </location>
</feature>
<feature type="modified residue" description="Phosphothreonine" evidence="17">
    <location>
        <position position="132"/>
    </location>
</feature>
<feature type="modified residue" description="Phosphoserine" evidence="17">
    <location>
        <position position="137"/>
    </location>
</feature>
<feature type="modified residue" description="Phosphoserine" evidence="17">
    <location>
        <position position="140"/>
    </location>
</feature>
<feature type="modified residue" description="Phosphoserine" evidence="17">
    <location>
        <position position="143"/>
    </location>
</feature>
<feature type="modified residue" description="Phosphotyrosine" evidence="1">
    <location>
        <position position="181"/>
    </location>
</feature>
<feature type="modified residue" description="Phosphoserine" evidence="3">
    <location>
        <position position="230"/>
    </location>
</feature>
<feature type="modified residue" description="Phosphoserine; by CDK5" evidence="1">
    <location>
        <position position="244"/>
    </location>
</feature>
<feature type="modified residue" description="Phosphoserine" evidence="1">
    <location>
        <position position="250"/>
    </location>
</feature>
<feature type="modified residue" description="Phosphoserine" evidence="3">
    <location>
        <position position="258"/>
    </location>
</feature>
<feature type="modified residue" description="Phosphoserine" evidence="3">
    <location>
        <position position="261"/>
    </location>
</feature>
<feature type="modified residue" description="Phosphoserine" evidence="17">
    <location>
        <position position="272"/>
    </location>
</feature>
<feature type="modified residue" description="Phosphoserine" evidence="1">
    <location>
        <position position="303"/>
    </location>
</feature>
<feature type="modified residue" description="Phosphoserine" evidence="17">
    <location>
        <position position="322"/>
    </location>
</feature>
<feature type="modified residue" description="Phosphoserine" evidence="3">
    <location>
        <position position="332"/>
    </location>
</feature>
<feature type="modified residue" description="Phosphoserine" evidence="17">
    <location>
        <position position="340"/>
    </location>
</feature>
<feature type="modified residue" description="Phosphoserine" evidence="1">
    <location>
        <position position="533"/>
    </location>
</feature>
<feature type="splice variant" id="VSP_016357" description="In isoform Alpha." evidence="11 12">
    <location>
        <begin position="278"/>
        <end position="311"/>
    </location>
</feature>
<feature type="sequence conflict" description="In Ref. 2; BAE42452." evidence="13" ref="2">
    <original>P</original>
    <variation>R</variation>
    <location>
        <position position="71"/>
    </location>
</feature>
<feature type="sequence conflict" description="In Ref. 2; BAE34151." evidence="13" ref="2">
    <original>D</original>
    <variation>N</variation>
    <location>
        <position position="212"/>
    </location>
</feature>
<feature type="sequence conflict" description="In Ref. 2; BAE34151." evidence="13" ref="2">
    <original>G</original>
    <variation>S</variation>
    <location>
        <position position="294"/>
    </location>
</feature>
<feature type="helix" evidence="18">
    <location>
        <begin position="4"/>
        <end position="9"/>
    </location>
</feature>
<feature type="helix" evidence="19">
    <location>
        <begin position="260"/>
        <end position="276"/>
    </location>
</feature>
<sequence length="591" mass="64476">MDDLDALLADLESTTSHISKRPVFLSEEPPYSYPTGNHTYQEIAVPPPVPPPPSSEALNGTVLDPLDQWQPSGSRYAHQQPPSPLPVYSSSAKNSSASNTQDGVGSLCSRAGEEEHVYSFPNKQKSAEPSPTVMSSSLGSNLSELDRLLLELNAVQHSPPGFPADEAESSPPLPGALSPLYGIPENNTPLGGKAGPLVKEKPKRNGGRGLEDVRPSVESLLDELESSVPSPVPAITVNQGEMSSPQRVTSSQQQTRISASSATRELDELMASLSDFKMQGLEQRVDGERPWAAGWPPSSRQSSPEGQDEGGFMAQGKTGSSSPPGGLSKPGSQLDSMLGSLQSDLNKLGVATVAKGVCGACKKPIAGQVVTAMGKTWHPEHFVCTHCQEEIGSRNFFERDGQPYCEKDYHSLFSPRCYYCNGPILDKVVTALDRTWHPEHFFCAQCGAFFGPEGFHEKDGKAYCRKDYFDMFAPKCGGCARAILENYISALNTLWHPECFVCRECFTPFVNGSFFEHDGQPYCEVHYHERRGSLCSGCQKPITGRCITAMAKKFHPEHFVCAFCLKQLNKGTFKEQNDKPYCQSCFVKLFC</sequence>
<protein>
    <recommendedName>
        <fullName evidence="11">Paxillin</fullName>
    </recommendedName>
</protein>
<proteinExistence type="evidence at protein level"/>
<evidence type="ECO:0000250" key="1">
    <source>
        <dbReference type="UniProtKB" id="P49023"/>
    </source>
</evidence>
<evidence type="ECO:0000250" key="2">
    <source>
        <dbReference type="UniProtKB" id="P49024"/>
    </source>
</evidence>
<evidence type="ECO:0000250" key="3">
    <source>
        <dbReference type="UniProtKB" id="Q66H76"/>
    </source>
</evidence>
<evidence type="ECO:0000255" key="4">
    <source>
        <dbReference type="PROSITE-ProRule" id="PRU00125"/>
    </source>
</evidence>
<evidence type="ECO:0000256" key="5">
    <source>
        <dbReference type="SAM" id="MobiDB-lite"/>
    </source>
</evidence>
<evidence type="ECO:0000269" key="6">
    <source>
    </source>
</evidence>
<evidence type="ECO:0000269" key="7">
    <source>
    </source>
</evidence>
<evidence type="ECO:0000269" key="8">
    <source>
    </source>
</evidence>
<evidence type="ECO:0000269" key="9">
    <source>
    </source>
</evidence>
<evidence type="ECO:0000269" key="10">
    <source>
    </source>
</evidence>
<evidence type="ECO:0000303" key="11">
    <source>
    </source>
</evidence>
<evidence type="ECO:0000303" key="12">
    <source>
    </source>
</evidence>
<evidence type="ECO:0000305" key="13"/>
<evidence type="ECO:0000312" key="14">
    <source>
        <dbReference type="MGI" id="MGI:108295"/>
    </source>
</evidence>
<evidence type="ECO:0007744" key="15">
    <source>
    </source>
</evidence>
<evidence type="ECO:0007744" key="16">
    <source>
    </source>
</evidence>
<evidence type="ECO:0007744" key="17">
    <source>
    </source>
</evidence>
<evidence type="ECO:0007829" key="18">
    <source>
        <dbReference type="PDB" id="5W93"/>
    </source>
</evidence>
<evidence type="ECO:0007829" key="19">
    <source>
        <dbReference type="PDB" id="6JMU"/>
    </source>
</evidence>
<organism>
    <name type="scientific">Mus musculus</name>
    <name type="common">Mouse</name>
    <dbReference type="NCBI Taxonomy" id="10090"/>
    <lineage>
        <taxon>Eukaryota</taxon>
        <taxon>Metazoa</taxon>
        <taxon>Chordata</taxon>
        <taxon>Craniata</taxon>
        <taxon>Vertebrata</taxon>
        <taxon>Euteleostomi</taxon>
        <taxon>Mammalia</taxon>
        <taxon>Eutheria</taxon>
        <taxon>Euarchontoglires</taxon>
        <taxon>Glires</taxon>
        <taxon>Rodentia</taxon>
        <taxon>Myomorpha</taxon>
        <taxon>Muroidea</taxon>
        <taxon>Muridae</taxon>
        <taxon>Murinae</taxon>
        <taxon>Mus</taxon>
        <taxon>Mus</taxon>
    </lineage>
</organism>
<name>PAXI_MOUSE</name>
<gene>
    <name evidence="14" type="primary">Pxn</name>
</gene>
<reference key="1">
    <citation type="journal article" date="2002" name="J. Biol. Chem.">
        <title>Linkage of caspase-mediated degradation of paxillin to apoptosis in Ba/F3 murine pro-B lymphocytes.</title>
        <authorList>
            <person name="Chay K.O."/>
            <person name="Park S.S."/>
            <person name="Mushinski J.F."/>
        </authorList>
    </citation>
    <scope>NUCLEOTIDE SEQUENCE [MRNA] (ISOFORMS ALPHA AND BETA)</scope>
    <source>
        <strain>BALB/cJ</strain>
        <tissue>Testis</tissue>
    </source>
</reference>
<reference key="2">
    <citation type="journal article" date="2005" name="Science">
        <title>The transcriptional landscape of the mammalian genome.</title>
        <authorList>
            <person name="Carninci P."/>
            <person name="Kasukawa T."/>
            <person name="Katayama S."/>
            <person name="Gough J."/>
            <person name="Frith M.C."/>
            <person name="Maeda N."/>
            <person name="Oyama R."/>
            <person name="Ravasi T."/>
            <person name="Lenhard B."/>
            <person name="Wells C."/>
            <person name="Kodzius R."/>
            <person name="Shimokawa K."/>
            <person name="Bajic V.B."/>
            <person name="Brenner S.E."/>
            <person name="Batalov S."/>
            <person name="Forrest A.R."/>
            <person name="Zavolan M."/>
            <person name="Davis M.J."/>
            <person name="Wilming L.G."/>
            <person name="Aidinis V."/>
            <person name="Allen J.E."/>
            <person name="Ambesi-Impiombato A."/>
            <person name="Apweiler R."/>
            <person name="Aturaliya R.N."/>
            <person name="Bailey T.L."/>
            <person name="Bansal M."/>
            <person name="Baxter L."/>
            <person name="Beisel K.W."/>
            <person name="Bersano T."/>
            <person name="Bono H."/>
            <person name="Chalk A.M."/>
            <person name="Chiu K.P."/>
            <person name="Choudhary V."/>
            <person name="Christoffels A."/>
            <person name="Clutterbuck D.R."/>
            <person name="Crowe M.L."/>
            <person name="Dalla E."/>
            <person name="Dalrymple B.P."/>
            <person name="de Bono B."/>
            <person name="Della Gatta G."/>
            <person name="di Bernardo D."/>
            <person name="Down T."/>
            <person name="Engstrom P."/>
            <person name="Fagiolini M."/>
            <person name="Faulkner G."/>
            <person name="Fletcher C.F."/>
            <person name="Fukushima T."/>
            <person name="Furuno M."/>
            <person name="Futaki S."/>
            <person name="Gariboldi M."/>
            <person name="Georgii-Hemming P."/>
            <person name="Gingeras T.R."/>
            <person name="Gojobori T."/>
            <person name="Green R.E."/>
            <person name="Gustincich S."/>
            <person name="Harbers M."/>
            <person name="Hayashi Y."/>
            <person name="Hensch T.K."/>
            <person name="Hirokawa N."/>
            <person name="Hill D."/>
            <person name="Huminiecki L."/>
            <person name="Iacono M."/>
            <person name="Ikeo K."/>
            <person name="Iwama A."/>
            <person name="Ishikawa T."/>
            <person name="Jakt M."/>
            <person name="Kanapin A."/>
            <person name="Katoh M."/>
            <person name="Kawasawa Y."/>
            <person name="Kelso J."/>
            <person name="Kitamura H."/>
            <person name="Kitano H."/>
            <person name="Kollias G."/>
            <person name="Krishnan S.P."/>
            <person name="Kruger A."/>
            <person name="Kummerfeld S.K."/>
            <person name="Kurochkin I.V."/>
            <person name="Lareau L.F."/>
            <person name="Lazarevic D."/>
            <person name="Lipovich L."/>
            <person name="Liu J."/>
            <person name="Liuni S."/>
            <person name="McWilliam S."/>
            <person name="Madan Babu M."/>
            <person name="Madera M."/>
            <person name="Marchionni L."/>
            <person name="Matsuda H."/>
            <person name="Matsuzawa S."/>
            <person name="Miki H."/>
            <person name="Mignone F."/>
            <person name="Miyake S."/>
            <person name="Morris K."/>
            <person name="Mottagui-Tabar S."/>
            <person name="Mulder N."/>
            <person name="Nakano N."/>
            <person name="Nakauchi H."/>
            <person name="Ng P."/>
            <person name="Nilsson R."/>
            <person name="Nishiguchi S."/>
            <person name="Nishikawa S."/>
            <person name="Nori F."/>
            <person name="Ohara O."/>
            <person name="Okazaki Y."/>
            <person name="Orlando V."/>
            <person name="Pang K.C."/>
            <person name="Pavan W.J."/>
            <person name="Pavesi G."/>
            <person name="Pesole G."/>
            <person name="Petrovsky N."/>
            <person name="Piazza S."/>
            <person name="Reed J."/>
            <person name="Reid J.F."/>
            <person name="Ring B.Z."/>
            <person name="Ringwald M."/>
            <person name="Rost B."/>
            <person name="Ruan Y."/>
            <person name="Salzberg S.L."/>
            <person name="Sandelin A."/>
            <person name="Schneider C."/>
            <person name="Schoenbach C."/>
            <person name="Sekiguchi K."/>
            <person name="Semple C.A."/>
            <person name="Seno S."/>
            <person name="Sessa L."/>
            <person name="Sheng Y."/>
            <person name="Shibata Y."/>
            <person name="Shimada H."/>
            <person name="Shimada K."/>
            <person name="Silva D."/>
            <person name="Sinclair B."/>
            <person name="Sperling S."/>
            <person name="Stupka E."/>
            <person name="Sugiura K."/>
            <person name="Sultana R."/>
            <person name="Takenaka Y."/>
            <person name="Taki K."/>
            <person name="Tammoja K."/>
            <person name="Tan S.L."/>
            <person name="Tang S."/>
            <person name="Taylor M.S."/>
            <person name="Tegner J."/>
            <person name="Teichmann S.A."/>
            <person name="Ueda H.R."/>
            <person name="van Nimwegen E."/>
            <person name="Verardo R."/>
            <person name="Wei C.L."/>
            <person name="Yagi K."/>
            <person name="Yamanishi H."/>
            <person name="Zabarovsky E."/>
            <person name="Zhu S."/>
            <person name="Zimmer A."/>
            <person name="Hide W."/>
            <person name="Bult C."/>
            <person name="Grimmond S.M."/>
            <person name="Teasdale R.D."/>
            <person name="Liu E.T."/>
            <person name="Brusic V."/>
            <person name="Quackenbush J."/>
            <person name="Wahlestedt C."/>
            <person name="Mattick J.S."/>
            <person name="Hume D.A."/>
            <person name="Kai C."/>
            <person name="Sasaki D."/>
            <person name="Tomaru Y."/>
            <person name="Fukuda S."/>
            <person name="Kanamori-Katayama M."/>
            <person name="Suzuki M."/>
            <person name="Aoki J."/>
            <person name="Arakawa T."/>
            <person name="Iida J."/>
            <person name="Imamura K."/>
            <person name="Itoh M."/>
            <person name="Kato T."/>
            <person name="Kawaji H."/>
            <person name="Kawagashira N."/>
            <person name="Kawashima T."/>
            <person name="Kojima M."/>
            <person name="Kondo S."/>
            <person name="Konno H."/>
            <person name="Nakano K."/>
            <person name="Ninomiya N."/>
            <person name="Nishio T."/>
            <person name="Okada M."/>
            <person name="Plessy C."/>
            <person name="Shibata K."/>
            <person name="Shiraki T."/>
            <person name="Suzuki S."/>
            <person name="Tagami M."/>
            <person name="Waki K."/>
            <person name="Watahiki A."/>
            <person name="Okamura-Oho Y."/>
            <person name="Suzuki H."/>
            <person name="Kawai J."/>
            <person name="Hayashizaki Y."/>
        </authorList>
    </citation>
    <scope>NUCLEOTIDE SEQUENCE [LARGE SCALE MRNA] (ISOFORMS ALPHA AND BETA)</scope>
    <source>
        <strain>C57BL/6J</strain>
        <strain>NOD</strain>
        <tissue>Placenta</tissue>
        <tissue>Spleen</tissue>
    </source>
</reference>
<reference key="3">
    <citation type="journal article" date="1996" name="J. Biol. Chem.">
        <title>The related adhesion focal tyrosine kinase forms a complex with paxillin in hematopoietic cells.</title>
        <authorList>
            <person name="Salgia R."/>
            <person name="Avraham S."/>
            <person name="Pisick E."/>
            <person name="Li J.L."/>
            <person name="Raja S."/>
            <person name="Greenfield E.A."/>
            <person name="Sattler M."/>
            <person name="Avraham H."/>
            <person name="Griffin J.D."/>
        </authorList>
    </citation>
    <scope>INTERACTION WITH PTK2B/PYK2</scope>
    <scope>SUBCELLULAR LOCATION</scope>
</reference>
<reference key="4">
    <citation type="journal article" date="2000" name="J. Biol. Chem.">
        <title>Phosphorylation of paxillin via the ERK mitogen-activated protein kinase cascade in EL4 thymoma cells.</title>
        <authorList>
            <person name="Ku H."/>
            <person name="Meier K.E."/>
        </authorList>
    </citation>
    <scope>PHOSPHORYLATION BY MAPK1/ERK2</scope>
</reference>
<reference key="5">
    <citation type="journal article" date="2000" name="J. Cell Biol.">
        <title>Actopaxin, a new focal adhesion protein that binds paxillin LD motifs and actin and regulates cell adhesion.</title>
        <authorList>
            <person name="Nikolopoulos S.N."/>
            <person name="Turner C.E."/>
        </authorList>
    </citation>
    <scope>INTERACTION WITH PARVA</scope>
</reference>
<reference key="6">
    <citation type="journal article" date="2002" name="J. Biol. Chem.">
        <title>Syndesmos, a syndecan-4 cytoplasmic domain interactor, binds to the focal adhesion adaptor proteins paxillin and Hic-5.</title>
        <authorList>
            <person name="Denhez F."/>
            <person name="Wilcox-Adelman S.A."/>
            <person name="Baciu P.C."/>
            <person name="Saoncella S."/>
            <person name="Lee S."/>
            <person name="French B."/>
            <person name="Neveu W."/>
            <person name="Goetinck P.F."/>
        </authorList>
    </citation>
    <scope>INTERACTION WITH NUDT16L1</scope>
</reference>
<reference key="7">
    <citation type="journal article" date="2002" name="Nat. Struct. Biol.">
        <title>The focal adhesion targeting (FAT) region of focal adhesion kinase is a four-helix bundle that binds paxillin.</title>
        <authorList>
            <person name="Hayashi I."/>
            <person name="Vuori K."/>
            <person name="Liddington R.C."/>
        </authorList>
    </citation>
    <scope>INTERACTION WITH PTK2/FAK1</scope>
</reference>
<reference key="8">
    <citation type="journal article" date="2005" name="Nat. Biotechnol.">
        <title>Immunoaffinity profiling of tyrosine phosphorylation in cancer cells.</title>
        <authorList>
            <person name="Rush J."/>
            <person name="Moritz A."/>
            <person name="Lee K.A."/>
            <person name="Guo A."/>
            <person name="Goss V.L."/>
            <person name="Spek E.J."/>
            <person name="Zhang H."/>
            <person name="Zha X.-M."/>
            <person name="Polakiewicz R.D."/>
            <person name="Comb M.J."/>
        </authorList>
    </citation>
    <scope>IDENTIFICATION BY MASS SPECTROMETRY [LARGE SCALE ANALYSIS]</scope>
</reference>
<reference key="9">
    <citation type="journal article" date="2008" name="J. Proteome Res.">
        <title>Large-scale identification and evolution indexing of tyrosine phosphorylation sites from murine brain.</title>
        <authorList>
            <person name="Ballif B.A."/>
            <person name="Carey G.R."/>
            <person name="Sunyaev S.R."/>
            <person name="Gygi S.P."/>
        </authorList>
    </citation>
    <scope>PHOSPHORYLATION [LARGE SCALE ANALYSIS] AT TYR-118</scope>
    <scope>IDENTIFICATION BY MASS SPECTROMETRY [LARGE SCALE ANALYSIS]</scope>
    <source>
        <tissue>Brain</tissue>
    </source>
</reference>
<reference key="10">
    <citation type="journal article" date="2009" name="Mol. Cell. Proteomics">
        <title>Large scale localization of protein phosphorylation by use of electron capture dissociation mass spectrometry.</title>
        <authorList>
            <person name="Sweet S.M."/>
            <person name="Bailey C.M."/>
            <person name="Cunningham D.L."/>
            <person name="Heath J.K."/>
            <person name="Cooper H.J."/>
        </authorList>
    </citation>
    <scope>PHOSPHORYLATION [LARGE SCALE ANALYSIS] AT SER-83; TYR-88 AND TYR-118</scope>
    <scope>IDENTIFICATION BY MASS SPECTROMETRY [LARGE SCALE ANALYSIS]</scope>
    <source>
        <tissue>Embryonic fibroblast</tissue>
    </source>
</reference>
<reference key="11">
    <citation type="journal article" date="2010" name="Cell">
        <title>A tissue-specific atlas of mouse protein phosphorylation and expression.</title>
        <authorList>
            <person name="Huttlin E.L."/>
            <person name="Jedrychowski M.P."/>
            <person name="Elias J.E."/>
            <person name="Goswami T."/>
            <person name="Rad R."/>
            <person name="Beausoleil S.A."/>
            <person name="Villen J."/>
            <person name="Haas W."/>
            <person name="Sowa M.E."/>
            <person name="Gygi S.P."/>
        </authorList>
    </citation>
    <scope>PHOSPHORYLATION [LARGE SCALE ANALYSIS] AT SER-83; TYR-118; SER-126; SER-130; THR-132; SER-137; SER-140; SER-143; SER-272; SER-322 AND SER-340</scope>
    <scope>IDENTIFICATION BY MASS SPECTROMETRY [LARGE SCALE ANALYSIS]</scope>
    <source>
        <tissue>Brain</tissue>
        <tissue>Brown adipose tissue</tissue>
        <tissue>Heart</tissue>
        <tissue>Kidney</tissue>
        <tissue>Liver</tissue>
        <tissue>Lung</tissue>
        <tissue>Pancreas</tissue>
        <tissue>Spleen</tissue>
        <tissue>Testis</tissue>
    </source>
</reference>
<reference key="12">
    <citation type="journal article" date="2011" name="J. Invest. Dermatol.">
        <title>Regulation of focal adhesions by flightless i involves inhibition of paxillin phosphorylation via a Rac1-dependent pathway.</title>
        <authorList>
            <person name="Kopecki Z."/>
            <person name="O'Neill G.M."/>
            <person name="Arkell R.M."/>
            <person name="Cowin A.J."/>
        </authorList>
    </citation>
    <scope>PHOSPHORYLATION AT TYR-118</scope>
</reference>
<accession>Q8VI36</accession>
<accession>Q3TB62</accession>
<accession>Q3TZQ6</accession>
<accession>Q8VI37</accession>
<comment type="function">
    <text evidence="1">Cytoskeletal protein involved in actin-membrane attachment at sites of cell adhesion to the extracellular matrix (focal adhesion). Recruits other proteins such as TRIM15 to focal adhesion.</text>
</comment>
<comment type="subunit">
    <text evidence="1 3 6 7 8 10">Interacts in vitro with VCL/vinculin as well as to the SH3 domain of SRC and, when tyrosine phosphorylated, to the SH2 domain of CRK (By similarity). Interacts with GIT1 (By similarity). Interacts with NUDT16L1/SDOS (PubMed:11805099). Interacts with PTK2/FAK1 (PubMed:11799401). Interacts with PTK2B/PYK2 (PubMed:8940124). Interacts with ASAP2 (By similarity). Interacts with unphosphorylated ITGA4 (By similarity). Interacts with RNF5 (By similarity). Interacts with PDCD10 (By similarity). Interacts with NEK3, the interaction is prolactin-dependent (By similarity). Interacts with PTK6 (By similarity). Interacts with TGFB1I1 (By similarity). Interacts with SORBS1 (By similarity). Interacts with PARVB (By similarity). Interacts (via LD motif 4) with PARVA/PARVIN (PubMed:11134073). Interacts (via LD motif 4) with ILK (By similarity). Interacts (via cytoplasmic domain) with CEACAM1; the interaction is phosphotyrosyl-dependent (By similarity). Interacts with LIMA1; this complex stabilizes actin dynamics (By similarity). Interacts with CD36 (via C-terminus) (By similarity). Interacts with TRIM15 (By similarity). Interacts with PAK4; PAK4 acts as a scaffold to suppport PAXI phosphorylation at Ser-272 (By similarity).</text>
</comment>
<comment type="interaction">
    <interactant intactId="EBI-983394">
        <id>Q8VI36</id>
    </interactant>
    <interactant intactId="EBI-397964">
        <id>P11627</id>
        <label>L1cam</label>
    </interactant>
    <organismsDiffer>false</organismsDiffer>
    <experiments>2</experiments>
</comment>
<comment type="interaction">
    <interactant intactId="EBI-983394">
        <id>Q8VI36</id>
    </interactant>
    <interactant intactId="EBI-77070">
        <id>P34152</id>
        <label>Ptk2</label>
    </interactant>
    <organismsDiffer>false</organismsDiffer>
    <experiments>5</experiments>
</comment>
<comment type="interaction">
    <interactant intactId="EBI-983394">
        <id>Q8VI36</id>
    </interactant>
    <interactant intactId="EBI-432047">
        <id>Q64727</id>
        <label>Vcl</label>
    </interactant>
    <organismsDiffer>false</organismsDiffer>
    <experiments>3</experiments>
</comment>
<comment type="interaction">
    <interactant intactId="EBI-983394">
        <id>Q8VI36</id>
    </interactant>
    <interactant intactId="EBI-968788">
        <id>P18031</id>
        <label>PTPN1</label>
    </interactant>
    <organismsDiffer>true</organismsDiffer>
    <experiments>2</experiments>
</comment>
<comment type="subcellular location">
    <subcellularLocation>
        <location evidence="1">Cytoplasm</location>
        <location evidence="1">Cytoskeleton</location>
    </subcellularLocation>
    <subcellularLocation>
        <location evidence="1">Cell junction</location>
        <location evidence="1">Focal adhesion</location>
    </subcellularLocation>
    <subcellularLocation>
        <location evidence="10">Cytoplasm</location>
        <location evidence="10">Cell cortex</location>
    </subcellularLocation>
    <text evidence="1">Colocalizes with integrins at the cell periphery. Colocalizes with PXN to membrane ruffles and the leading edge of migrating cells (By similarity).</text>
</comment>
<comment type="alternative products">
    <event type="alternative splicing"/>
    <isoform>
        <id>Q8VI36-1</id>
        <name>Beta</name>
        <sequence type="displayed"/>
    </isoform>
    <isoform>
        <id>Q8VI36-2</id>
        <name>Alpha</name>
        <sequence type="described" ref="VSP_016357"/>
    </isoform>
</comment>
<comment type="PTM">
    <text evidence="1">Phosphorylated by MAPK1/ERK2. Phosphorylated on tyrosine residues during integrin-mediated cell adhesion, embryonic development, fibroblast transformation and following stimulation of cells by mitogens. Phosphorylation at Ser-244 by CDK5 reduces its interaction with PTK2/FAK1 in matrix-cell focal adhesions (MCFA) during oligodendrocytes (OLs) differentiation (By similarity). Phosphorylation at Tyr-31 and Tyr-118 by PTK6 promote the activation of RAC1 via CRK/CrKII, thereby promoting migration and invasion (By similarity). Phosphorylation at Ser-250 by SLK is required for PXN redistribution and cell motility (By similarity). Phosphorylation at Ser-272 promotes focal adhesion disassembly during cell migration (By similarity).</text>
</comment>
<comment type="similarity">
    <text evidence="13">Belongs to the paxillin family.</text>
</comment>
<dbReference type="EMBL" id="AF293883">
    <property type="protein sequence ID" value="AAL71910.1"/>
    <property type="molecule type" value="mRNA"/>
</dbReference>
<dbReference type="EMBL" id="AF293882">
    <property type="protein sequence ID" value="AAL71909.1"/>
    <property type="molecule type" value="mRNA"/>
</dbReference>
<dbReference type="EMBL" id="AK149933">
    <property type="protein sequence ID" value="BAE29176.1"/>
    <property type="molecule type" value="mRNA"/>
</dbReference>
<dbReference type="EMBL" id="AK157688">
    <property type="protein sequence ID" value="BAE34151.1"/>
    <property type="molecule type" value="mRNA"/>
</dbReference>
<dbReference type="EMBL" id="AK167299">
    <property type="protein sequence ID" value="BAE39404.1"/>
    <property type="molecule type" value="mRNA"/>
</dbReference>
<dbReference type="EMBL" id="AK171436">
    <property type="protein sequence ID" value="BAE42452.1"/>
    <property type="molecule type" value="mRNA"/>
</dbReference>
<dbReference type="CCDS" id="CCDS19593.1">
    <molecule id="Q8VI36-2"/>
</dbReference>
<dbReference type="CCDS" id="CCDS39229.1">
    <molecule id="Q8VI36-1"/>
</dbReference>
<dbReference type="RefSeq" id="NP_035353.1">
    <molecule id="Q8VI36-2"/>
    <property type="nucleotide sequence ID" value="NM_011223.4"/>
</dbReference>
<dbReference type="RefSeq" id="NP_598676.2">
    <property type="nucleotide sequence ID" value="NM_133915.3"/>
</dbReference>
<dbReference type="PDB" id="5W93">
    <property type="method" value="X-ray"/>
    <property type="resolution" value="2.00 A"/>
    <property type="chains" value="D/E/F=1-20"/>
</dbReference>
<dbReference type="PDB" id="6JMU">
    <property type="method" value="X-ray"/>
    <property type="resolution" value="2.00 A"/>
    <property type="chains" value="C/D=260-282"/>
</dbReference>
<dbReference type="PDBsum" id="5W93"/>
<dbReference type="PDBsum" id="6JMU"/>
<dbReference type="SMR" id="Q8VI36"/>
<dbReference type="BioGRID" id="202525">
    <property type="interactions" value="23"/>
</dbReference>
<dbReference type="CORUM" id="Q8VI36"/>
<dbReference type="FunCoup" id="Q8VI36">
    <property type="interactions" value="550"/>
</dbReference>
<dbReference type="IntAct" id="Q8VI36">
    <property type="interactions" value="17"/>
</dbReference>
<dbReference type="MINT" id="Q8VI36"/>
<dbReference type="STRING" id="10090.ENSMUSP00000083709"/>
<dbReference type="GlyGen" id="Q8VI36">
    <property type="glycosylation" value="2 sites, 1 O-linked glycan (2 sites)"/>
</dbReference>
<dbReference type="iPTMnet" id="Q8VI36"/>
<dbReference type="PhosphoSitePlus" id="Q8VI36"/>
<dbReference type="SwissPalm" id="Q8VI36"/>
<dbReference type="jPOST" id="Q8VI36"/>
<dbReference type="PaxDb" id="10090-ENSMUSP00000083709"/>
<dbReference type="PeptideAtlas" id="Q8VI36"/>
<dbReference type="ProteomicsDB" id="287789">
    <molecule id="Q8VI36-1"/>
</dbReference>
<dbReference type="ProteomicsDB" id="287790">
    <molecule id="Q8VI36-2"/>
</dbReference>
<dbReference type="Pumba" id="Q8VI36"/>
<dbReference type="Antibodypedia" id="3546">
    <property type="antibodies" value="1653 antibodies from 48 providers"/>
</dbReference>
<dbReference type="DNASU" id="19303"/>
<dbReference type="Ensembl" id="ENSMUST00000067268.15">
    <molecule id="Q8VI36-2"/>
    <property type="protein sequence ID" value="ENSMUSP00000069624.9"/>
    <property type="gene ID" value="ENSMUSG00000029528.20"/>
</dbReference>
<dbReference type="GeneID" id="19303"/>
<dbReference type="KEGG" id="mmu:19303"/>
<dbReference type="UCSC" id="uc008zeb.2">
    <molecule id="Q8VI36-2"/>
    <property type="organism name" value="mouse"/>
</dbReference>
<dbReference type="AGR" id="MGI:108295"/>
<dbReference type="CTD" id="5829"/>
<dbReference type="MGI" id="MGI:108295">
    <property type="gene designation" value="Pxn"/>
</dbReference>
<dbReference type="VEuPathDB" id="HostDB:ENSMUSG00000029528"/>
<dbReference type="eggNOG" id="KOG1703">
    <property type="taxonomic scope" value="Eukaryota"/>
</dbReference>
<dbReference type="GeneTree" id="ENSGT00940000158897"/>
<dbReference type="InParanoid" id="Q8VI36"/>
<dbReference type="PhylomeDB" id="Q8VI36"/>
<dbReference type="Reactome" id="R-MMU-180292">
    <property type="pathway name" value="GAB1 signalosome"/>
</dbReference>
<dbReference type="Reactome" id="R-MMU-4420097">
    <property type="pathway name" value="VEGFA-VEGFR2 Pathway"/>
</dbReference>
<dbReference type="Reactome" id="R-MMU-445355">
    <property type="pathway name" value="Smooth Muscle Contraction"/>
</dbReference>
<dbReference type="Reactome" id="R-MMU-446343">
    <property type="pathway name" value="Localization of the PINCH-ILK-PARVIN complex to focal adhesions"/>
</dbReference>
<dbReference type="Reactome" id="R-MMU-446388">
    <property type="pathway name" value="Regulation of cytoskeletal remodeling and cell spreading by IPP complex components"/>
</dbReference>
<dbReference type="Reactome" id="R-MMU-8849471">
    <property type="pathway name" value="PTK6 Regulates RHO GTPases, RAS GTPase and MAP kinases"/>
</dbReference>
<dbReference type="BioGRID-ORCS" id="19303">
    <property type="hits" value="4 hits in 78 CRISPR screens"/>
</dbReference>
<dbReference type="ChiTaRS" id="Pxn">
    <property type="organism name" value="mouse"/>
</dbReference>
<dbReference type="PRO" id="PR:Q8VI36"/>
<dbReference type="Proteomes" id="UP000000589">
    <property type="component" value="Chromosome 5"/>
</dbReference>
<dbReference type="RNAct" id="Q8VI36">
    <property type="molecule type" value="protein"/>
</dbReference>
<dbReference type="Bgee" id="ENSMUSG00000029528">
    <property type="expression patterns" value="Expressed in granulocyte and 255 other cell types or tissues"/>
</dbReference>
<dbReference type="ExpressionAtlas" id="Q8VI36">
    <property type="expression patterns" value="baseline and differential"/>
</dbReference>
<dbReference type="GO" id="GO:0005938">
    <property type="term" value="C:cell cortex"/>
    <property type="evidence" value="ECO:0007669"/>
    <property type="project" value="UniProtKB-SubCell"/>
</dbReference>
<dbReference type="GO" id="GO:0031252">
    <property type="term" value="C:cell leading edge"/>
    <property type="evidence" value="ECO:0000314"/>
    <property type="project" value="MGI"/>
</dbReference>
<dbReference type="GO" id="GO:0005856">
    <property type="term" value="C:cytoskeleton"/>
    <property type="evidence" value="ECO:0007669"/>
    <property type="project" value="UniProtKB-SubCell"/>
</dbReference>
<dbReference type="GO" id="GO:0005925">
    <property type="term" value="C:focal adhesion"/>
    <property type="evidence" value="ECO:0000314"/>
    <property type="project" value="BHF-UCL"/>
</dbReference>
<dbReference type="GO" id="GO:0030027">
    <property type="term" value="C:lamellipodium"/>
    <property type="evidence" value="ECO:0000314"/>
    <property type="project" value="MGI"/>
</dbReference>
<dbReference type="GO" id="GO:0051435">
    <property type="term" value="F:BH4 domain binding"/>
    <property type="evidence" value="ECO:0000353"/>
    <property type="project" value="MGI"/>
</dbReference>
<dbReference type="GO" id="GO:0005078">
    <property type="term" value="F:MAP-kinase scaffold activity"/>
    <property type="evidence" value="ECO:0000314"/>
    <property type="project" value="MGI"/>
</dbReference>
<dbReference type="GO" id="GO:0046872">
    <property type="term" value="F:metal ion binding"/>
    <property type="evidence" value="ECO:0007669"/>
    <property type="project" value="UniProtKB-KW"/>
</dbReference>
<dbReference type="GO" id="GO:0038191">
    <property type="term" value="F:neuropilin binding"/>
    <property type="evidence" value="ECO:0000353"/>
    <property type="project" value="BHF-UCL"/>
</dbReference>
<dbReference type="GO" id="GO:0030159">
    <property type="term" value="F:signaling receptor complex adaptor activity"/>
    <property type="evidence" value="ECO:0000304"/>
    <property type="project" value="MGI"/>
</dbReference>
<dbReference type="GO" id="GO:0048754">
    <property type="term" value="P:branching morphogenesis of an epithelial tube"/>
    <property type="evidence" value="ECO:0000314"/>
    <property type="project" value="MGI"/>
</dbReference>
<dbReference type="GO" id="GO:0016477">
    <property type="term" value="P:cell migration"/>
    <property type="evidence" value="ECO:0000315"/>
    <property type="project" value="MGI"/>
</dbReference>
<dbReference type="GO" id="GO:0007010">
    <property type="term" value="P:cytoskeleton organization"/>
    <property type="evidence" value="ECO:0000315"/>
    <property type="project" value="MGI"/>
</dbReference>
<dbReference type="GO" id="GO:0048041">
    <property type="term" value="P:focal adhesion assembly"/>
    <property type="evidence" value="ECO:0000314"/>
    <property type="project" value="MGI"/>
</dbReference>
<dbReference type="GO" id="GO:0007229">
    <property type="term" value="P:integrin-mediated signaling pathway"/>
    <property type="evidence" value="ECO:0000315"/>
    <property type="project" value="MGI"/>
</dbReference>
<dbReference type="GO" id="GO:0030032">
    <property type="term" value="P:lamellipodium assembly"/>
    <property type="evidence" value="ECO:0000314"/>
    <property type="project" value="MGI"/>
</dbReference>
<dbReference type="GO" id="GO:0031663">
    <property type="term" value="P:lipopolysaccharide-mediated signaling pathway"/>
    <property type="evidence" value="ECO:0000315"/>
    <property type="project" value="ARUK-UCL"/>
</dbReference>
<dbReference type="GO" id="GO:0045766">
    <property type="term" value="P:positive regulation of angiogenesis"/>
    <property type="evidence" value="ECO:0000315"/>
    <property type="project" value="BHF-UCL"/>
</dbReference>
<dbReference type="GO" id="GO:1900026">
    <property type="term" value="P:positive regulation of substrate adhesion-dependent cell spreading"/>
    <property type="evidence" value="ECO:0000315"/>
    <property type="project" value="ARUK-UCL"/>
</dbReference>
<dbReference type="GO" id="GO:0008360">
    <property type="term" value="P:regulation of cell shape"/>
    <property type="evidence" value="ECO:0000315"/>
    <property type="project" value="MGI"/>
</dbReference>
<dbReference type="GO" id="GO:0034446">
    <property type="term" value="P:substrate adhesion-dependent cell spreading"/>
    <property type="evidence" value="ECO:0000315"/>
    <property type="project" value="MGI"/>
</dbReference>
<dbReference type="GO" id="GO:0007179">
    <property type="term" value="P:transforming growth factor beta receptor signaling pathway"/>
    <property type="evidence" value="ECO:0000314"/>
    <property type="project" value="UniProtKB"/>
</dbReference>
<dbReference type="CDD" id="cd09336">
    <property type="entry name" value="LIM1_Paxillin_like"/>
    <property type="match status" value="1"/>
</dbReference>
<dbReference type="CDD" id="cd09407">
    <property type="entry name" value="LIM2_Paxillin"/>
    <property type="match status" value="1"/>
</dbReference>
<dbReference type="CDD" id="cd09338">
    <property type="entry name" value="LIM3_Paxillin_like"/>
    <property type="match status" value="1"/>
</dbReference>
<dbReference type="CDD" id="cd09411">
    <property type="entry name" value="LIM4_Paxillin"/>
    <property type="match status" value="1"/>
</dbReference>
<dbReference type="FunFam" id="2.10.110.10:FF:000008">
    <property type="entry name" value="Paxillin isoform 1"/>
    <property type="match status" value="1"/>
</dbReference>
<dbReference type="FunFam" id="2.10.110.10:FF:000009">
    <property type="entry name" value="Paxillin isoform 1"/>
    <property type="match status" value="1"/>
</dbReference>
<dbReference type="FunFam" id="2.10.110.10:FF:000012">
    <property type="entry name" value="Paxillin isoform 1"/>
    <property type="match status" value="1"/>
</dbReference>
<dbReference type="FunFam" id="2.10.110.10:FF:000018">
    <property type="entry name" value="Paxillin isoform 1"/>
    <property type="match status" value="1"/>
</dbReference>
<dbReference type="Gene3D" id="2.10.110.10">
    <property type="entry name" value="Cysteine Rich Protein"/>
    <property type="match status" value="4"/>
</dbReference>
<dbReference type="InterPro" id="IPR047072">
    <property type="entry name" value="Paxillin_Lim_dom2"/>
</dbReference>
<dbReference type="InterPro" id="IPR001904">
    <property type="entry name" value="Paxillin_Lim_dom4"/>
</dbReference>
<dbReference type="InterPro" id="IPR047075">
    <property type="entry name" value="Paxillin_TGFB1I1_LIM_dom1"/>
</dbReference>
<dbReference type="InterPro" id="IPR001781">
    <property type="entry name" value="Znf_LIM"/>
</dbReference>
<dbReference type="PANTHER" id="PTHR24216:SF11">
    <property type="entry name" value="PAXILLIN"/>
    <property type="match status" value="1"/>
</dbReference>
<dbReference type="PANTHER" id="PTHR24216">
    <property type="entry name" value="PAXILLIN-RELATED"/>
    <property type="match status" value="1"/>
</dbReference>
<dbReference type="Pfam" id="PF00412">
    <property type="entry name" value="LIM"/>
    <property type="match status" value="4"/>
</dbReference>
<dbReference type="Pfam" id="PF03535">
    <property type="entry name" value="Paxillin"/>
    <property type="match status" value="1"/>
</dbReference>
<dbReference type="PRINTS" id="PR00832">
    <property type="entry name" value="PAXILLIN"/>
</dbReference>
<dbReference type="SMART" id="SM00132">
    <property type="entry name" value="LIM"/>
    <property type="match status" value="4"/>
</dbReference>
<dbReference type="SUPFAM" id="SSF57716">
    <property type="entry name" value="Glucocorticoid receptor-like (DNA-binding domain)"/>
    <property type="match status" value="5"/>
</dbReference>
<dbReference type="PROSITE" id="PS00478">
    <property type="entry name" value="LIM_DOMAIN_1"/>
    <property type="match status" value="4"/>
</dbReference>
<dbReference type="PROSITE" id="PS50023">
    <property type="entry name" value="LIM_DOMAIN_2"/>
    <property type="match status" value="4"/>
</dbReference>
<keyword id="KW-0002">3D-structure</keyword>
<keyword id="KW-0007">Acetylation</keyword>
<keyword id="KW-0025">Alternative splicing</keyword>
<keyword id="KW-0130">Cell adhesion</keyword>
<keyword id="KW-0965">Cell junction</keyword>
<keyword id="KW-0963">Cytoplasm</keyword>
<keyword id="KW-0206">Cytoskeleton</keyword>
<keyword id="KW-0440">LIM domain</keyword>
<keyword id="KW-0479">Metal-binding</keyword>
<keyword id="KW-0597">Phosphoprotein</keyword>
<keyword id="KW-1185">Reference proteome</keyword>
<keyword id="KW-0677">Repeat</keyword>
<keyword id="KW-0862">Zinc</keyword>